<organism>
    <name type="scientific">Stutzerimonas stutzeri</name>
    <name type="common">Pseudomonas stutzeri</name>
    <dbReference type="NCBI Taxonomy" id="316"/>
    <lineage>
        <taxon>Bacteria</taxon>
        <taxon>Pseudomonadati</taxon>
        <taxon>Pseudomonadota</taxon>
        <taxon>Gammaproteobacteria</taxon>
        <taxon>Pseudomonadales</taxon>
        <taxon>Pseudomonadaceae</taxon>
        <taxon>Stutzerimonas</taxon>
    </lineage>
</organism>
<name>RNFD_STUST</name>
<accession>Q9EVN4</accession>
<comment type="function">
    <text evidence="1">Part of a membrane-bound complex that couples electron transfer with translocation of ions across the membrane.</text>
</comment>
<comment type="cofactor">
    <cofactor evidence="1">
        <name>FMN</name>
        <dbReference type="ChEBI" id="CHEBI:58210"/>
    </cofactor>
</comment>
<comment type="subunit">
    <text evidence="1">The complex is composed of six subunits: RnfA, RnfB, RnfC, RnfD, RnfE and RnfG.</text>
</comment>
<comment type="subcellular location">
    <subcellularLocation>
        <location evidence="1">Cell inner membrane</location>
        <topology evidence="1">Multi-pass membrane protein</topology>
    </subcellularLocation>
</comment>
<comment type="similarity">
    <text evidence="1">Belongs to the NqrB/RnfD family.</text>
</comment>
<gene>
    <name evidence="1" type="primary">rnfD</name>
</gene>
<protein>
    <recommendedName>
        <fullName evidence="1">Ion-translocating oxidoreductase complex subunit D</fullName>
        <ecNumber evidence="1">7.-.-.-</ecNumber>
    </recommendedName>
    <alternativeName>
        <fullName evidence="1">Rnf electron transport complex subunit D</fullName>
    </alternativeName>
</protein>
<feature type="chain" id="PRO_0000074459" description="Ion-translocating oxidoreductase complex subunit D">
    <location>
        <begin position="1"/>
        <end position="354"/>
    </location>
</feature>
<feature type="transmembrane region" description="Helical" evidence="1">
    <location>
        <begin position="9"/>
        <end position="28"/>
    </location>
</feature>
<feature type="transmembrane region" description="Helical" evidence="1">
    <location>
        <begin position="67"/>
        <end position="87"/>
    </location>
</feature>
<feature type="transmembrane region" description="Helical" evidence="1">
    <location>
        <begin position="117"/>
        <end position="137"/>
    </location>
</feature>
<feature type="transmembrane region" description="Helical" evidence="1">
    <location>
        <begin position="200"/>
        <end position="220"/>
    </location>
</feature>
<feature type="transmembrane region" description="Helical" evidence="1">
    <location>
        <begin position="222"/>
        <end position="242"/>
    </location>
</feature>
<feature type="transmembrane region" description="Helical" evidence="1">
    <location>
        <begin position="249"/>
        <end position="269"/>
    </location>
</feature>
<feature type="transmembrane region" description="Helical" evidence="1">
    <location>
        <begin position="277"/>
        <end position="297"/>
    </location>
</feature>
<feature type="transmembrane region" description="Helical" evidence="1">
    <location>
        <begin position="301"/>
        <end position="321"/>
    </location>
</feature>
<feature type="modified residue" description="FMN phosphoryl threonine" evidence="1">
    <location>
        <position position="165"/>
    </location>
</feature>
<proteinExistence type="inferred from homology"/>
<reference key="1">
    <citation type="submission" date="2000-08" db="EMBL/GenBank/DDBJ databases">
        <title>Organisation of nif genes in Pseudomonas stutzeri A15, a rice endophyte.</title>
        <authorList>
            <person name="Desnoues N."/>
            <person name="Lin M."/>
            <person name="Elmerich C."/>
        </authorList>
    </citation>
    <scope>NUCLEOTIDE SEQUENCE [GENOMIC DNA]</scope>
    <source>
        <strain>A15</strain>
    </source>
</reference>
<keyword id="KW-0997">Cell inner membrane</keyword>
<keyword id="KW-1003">Cell membrane</keyword>
<keyword id="KW-0249">Electron transport</keyword>
<keyword id="KW-0285">Flavoprotein</keyword>
<keyword id="KW-0288">FMN</keyword>
<keyword id="KW-0472">Membrane</keyword>
<keyword id="KW-0597">Phosphoprotein</keyword>
<keyword id="KW-1278">Translocase</keyword>
<keyword id="KW-0812">Transmembrane</keyword>
<keyword id="KW-1133">Transmembrane helix</keyword>
<keyword id="KW-0813">Transport</keyword>
<dbReference type="EC" id="7.-.-.-" evidence="1"/>
<dbReference type="EMBL" id="AJ297529">
    <property type="protein sequence ID" value="CAC03727.1"/>
    <property type="molecule type" value="Genomic_DNA"/>
</dbReference>
<dbReference type="SMR" id="Q9EVN4"/>
<dbReference type="GO" id="GO:0005886">
    <property type="term" value="C:plasma membrane"/>
    <property type="evidence" value="ECO:0007669"/>
    <property type="project" value="UniProtKB-SubCell"/>
</dbReference>
<dbReference type="GO" id="GO:0022900">
    <property type="term" value="P:electron transport chain"/>
    <property type="evidence" value="ECO:0007669"/>
    <property type="project" value="UniProtKB-UniRule"/>
</dbReference>
<dbReference type="GO" id="GO:0055085">
    <property type="term" value="P:transmembrane transport"/>
    <property type="evidence" value="ECO:0007669"/>
    <property type="project" value="InterPro"/>
</dbReference>
<dbReference type="HAMAP" id="MF_00462">
    <property type="entry name" value="RsxD_RnfD"/>
    <property type="match status" value="1"/>
</dbReference>
<dbReference type="InterPro" id="IPR004338">
    <property type="entry name" value="NqrB/RnfD"/>
</dbReference>
<dbReference type="InterPro" id="IPR011303">
    <property type="entry name" value="RnfD_bac"/>
</dbReference>
<dbReference type="NCBIfam" id="TIGR01946">
    <property type="entry name" value="rnfD"/>
    <property type="match status" value="1"/>
</dbReference>
<dbReference type="PANTHER" id="PTHR30578">
    <property type="entry name" value="ELECTRON TRANSPORT COMPLEX PROTEIN RNFD"/>
    <property type="match status" value="1"/>
</dbReference>
<dbReference type="PANTHER" id="PTHR30578:SF0">
    <property type="entry name" value="ION-TRANSLOCATING OXIDOREDUCTASE COMPLEX SUBUNIT D"/>
    <property type="match status" value="1"/>
</dbReference>
<dbReference type="Pfam" id="PF03116">
    <property type="entry name" value="NQR2_RnfD_RnfE"/>
    <property type="match status" value="1"/>
</dbReference>
<evidence type="ECO:0000255" key="1">
    <source>
        <dbReference type="HAMAP-Rule" id="MF_00462"/>
    </source>
</evidence>
<sequence>MIRSSVDRIMLHVCLALLPTTAWGLYLFGWPAIYLWLLTCASAVACEAACLYLLGRPLRRLLDGSALLSGWLLALTLPPWAPWWIAVGGSMFAIGIGKQLYGGVGQNVFNPAMLARVALLIAFPLQMTTWALPLPLGTEGAPGWLEGLRITFAGGALADGLSGATALGHLQTELTLGHSAAQILDGHFALLPAFLGYSGGSLGETSELLILLGGLWLLALRIIHWEIPLGMLLTVGALAALANQIDPQVHGGGLFHLTSGGLLLGALFIATDPVTSPISRSGRLIFAIGCGALVFVIRSWGNFPEAVAFAVLLMNALVPLIDRVCRPRAYGRNARGKPLVAAKWTRQVKEVDKV</sequence>